<comment type="function">
    <text evidence="5">The light-harvesting complex (LHC) functions as a light receptor, it captures and delivers excitation energy to photosystems with which it is closely associated.</text>
</comment>
<comment type="function">
    <text evidence="5">May channel protons produced in the catalytic Mn center of water oxidation into the thylakoid lumen.</text>
</comment>
<comment type="cofactor">
    <text evidence="1">Binds at least 14 chlorophylls (8 Chl-a and 6 Chl-b) and carotenoids such as lutein and neoxanthin.</text>
</comment>
<comment type="subunit">
    <text>The LHC complex consists of chlorophyll a-b binding proteins.</text>
</comment>
<comment type="subcellular location">
    <subcellularLocation>
        <location>Plastid</location>
        <location>Chloroplast thylakoid membrane</location>
        <topology>Multi-pass membrane protein</topology>
    </subcellularLocation>
</comment>
<comment type="domain">
    <text>The N-terminus of the protein extends into the stroma where it is involved with adhesion of granal membranes and post-translational modifications; both are believed to mediate the distribution of excitation energy between photosystems I and II.</text>
</comment>
<comment type="PTM">
    <text evidence="1">Photoregulated by reversible phosphorylation of its threonine residues.</text>
</comment>
<comment type="similarity">
    <text evidence="6">Belongs to the light-harvesting chlorophyll a/b-binding (LHC) protein family.</text>
</comment>
<organism>
    <name type="scientific">Pisum sativum</name>
    <name type="common">Garden pea</name>
    <name type="synonym">Lathyrus oleraceus</name>
    <dbReference type="NCBI Taxonomy" id="3888"/>
    <lineage>
        <taxon>Eukaryota</taxon>
        <taxon>Viridiplantae</taxon>
        <taxon>Streptophyta</taxon>
        <taxon>Embryophyta</taxon>
        <taxon>Tracheophyta</taxon>
        <taxon>Spermatophyta</taxon>
        <taxon>Magnoliopsida</taxon>
        <taxon>eudicotyledons</taxon>
        <taxon>Gunneridae</taxon>
        <taxon>Pentapetalae</taxon>
        <taxon>rosids</taxon>
        <taxon>fabids</taxon>
        <taxon>Fabales</taxon>
        <taxon>Fabaceae</taxon>
        <taxon>Papilionoideae</taxon>
        <taxon>50 kb inversion clade</taxon>
        <taxon>NPAAA clade</taxon>
        <taxon>Hologalegina</taxon>
        <taxon>IRL clade</taxon>
        <taxon>Fabeae</taxon>
        <taxon>Pisum</taxon>
    </lineage>
</organism>
<proteinExistence type="evidence at protein level"/>
<reference key="1">
    <citation type="journal article" date="1983" name="J. Biol. Chem.">
        <title>Nucleotide sequences of two pea cDNA clones encoding the small subunit of ribulose 1,5-bisphosphate carboxylase and the major chlorophyll a/b-binding thylakoid polypeptide.</title>
        <authorList>
            <person name="Coruzzi G."/>
            <person name="Broglie R."/>
            <person name="Cashmore A."/>
            <person name="Chua N.-H."/>
        </authorList>
    </citation>
    <scope>NUCLEOTIDE SEQUENCE [MRNA]</scope>
    <source>
        <strain>cv. Progress No. 9</strain>
    </source>
</reference>
<reference key="2">
    <citation type="journal article" date="1990" name="Eur. J. Biochem.">
        <title>Dicyclohexylcarbodiimide-binding proteins related to the short circuit of the proton-pumping activity of photosystem II. Identified as light-harvesting chlorophyll-a/b-binding proteins.</title>
        <authorList>
            <person name="Jahns P."/>
            <person name="Junge W."/>
        </authorList>
    </citation>
    <scope>PROTEIN SEQUENCE OF 70-85</scope>
    <scope>FUNCTION</scope>
    <source>
        <tissue>Seedling</tissue>
    </source>
</reference>
<dbReference type="EMBL" id="J01253">
    <property type="protein sequence ID" value="AAA33650.1"/>
    <property type="molecule type" value="mRNA"/>
</dbReference>
<dbReference type="PIR" id="A26194">
    <property type="entry name" value="CDPM96"/>
</dbReference>
<dbReference type="SMR" id="P04159"/>
<dbReference type="GO" id="GO:0009535">
    <property type="term" value="C:chloroplast thylakoid membrane"/>
    <property type="evidence" value="ECO:0007669"/>
    <property type="project" value="UniProtKB-SubCell"/>
</dbReference>
<dbReference type="GO" id="GO:0009522">
    <property type="term" value="C:photosystem I"/>
    <property type="evidence" value="ECO:0007669"/>
    <property type="project" value="UniProtKB-KW"/>
</dbReference>
<dbReference type="GO" id="GO:0009523">
    <property type="term" value="C:photosystem II"/>
    <property type="evidence" value="ECO:0007669"/>
    <property type="project" value="UniProtKB-KW"/>
</dbReference>
<dbReference type="GO" id="GO:0016168">
    <property type="term" value="F:chlorophyll binding"/>
    <property type="evidence" value="ECO:0007669"/>
    <property type="project" value="UniProtKB-KW"/>
</dbReference>
<dbReference type="GO" id="GO:0046872">
    <property type="term" value="F:metal ion binding"/>
    <property type="evidence" value="ECO:0007669"/>
    <property type="project" value="UniProtKB-KW"/>
</dbReference>
<dbReference type="GO" id="GO:0009765">
    <property type="term" value="P:photosynthesis, light harvesting"/>
    <property type="evidence" value="ECO:0007669"/>
    <property type="project" value="InterPro"/>
</dbReference>
<dbReference type="FunFam" id="1.10.3460.10:FF:000001">
    <property type="entry name" value="Chlorophyll a-b binding protein, chloroplastic"/>
    <property type="match status" value="1"/>
</dbReference>
<dbReference type="Gene3D" id="1.10.3460.10">
    <property type="entry name" value="Chlorophyll a/b binding protein domain"/>
    <property type="match status" value="1"/>
</dbReference>
<dbReference type="InterPro" id="IPR001344">
    <property type="entry name" value="Chloro_AB-bd_pln"/>
</dbReference>
<dbReference type="InterPro" id="IPR022796">
    <property type="entry name" value="Chloroa_b-bind"/>
</dbReference>
<dbReference type="PANTHER" id="PTHR21649">
    <property type="entry name" value="CHLOROPHYLL A/B BINDING PROTEIN"/>
    <property type="match status" value="1"/>
</dbReference>
<dbReference type="Pfam" id="PF00504">
    <property type="entry name" value="Chloroa_b-bind"/>
    <property type="match status" value="1"/>
</dbReference>
<dbReference type="SUPFAM" id="SSF103511">
    <property type="entry name" value="Chlorophyll a-b binding protein"/>
    <property type="match status" value="1"/>
</dbReference>
<protein>
    <recommendedName>
        <fullName>Chlorophyll a-b binding protein AB96</fullName>
    </recommendedName>
    <alternativeName>
        <fullName>LHCII type I CAB-AB96</fullName>
        <shortName>LHCP</shortName>
    </alternativeName>
    <alternativeName>
        <fullName>Major 15</fullName>
    </alternativeName>
</protein>
<name>CB21_PEA</name>
<evidence type="ECO:0000250" key="1"/>
<evidence type="ECO:0000250" key="2">
    <source>
        <dbReference type="UniProtKB" id="P07371"/>
    </source>
</evidence>
<evidence type="ECO:0000250" key="3">
    <source>
        <dbReference type="UniProtKB" id="P12333"/>
    </source>
</evidence>
<evidence type="ECO:0000255" key="4"/>
<evidence type="ECO:0000269" key="5">
    <source>
    </source>
</evidence>
<evidence type="ECO:0000305" key="6"/>
<keyword id="KW-0148">Chlorophyll</keyword>
<keyword id="KW-0150">Chloroplast</keyword>
<keyword id="KW-0157">Chromophore</keyword>
<keyword id="KW-0903">Direct protein sequencing</keyword>
<keyword id="KW-0460">Magnesium</keyword>
<keyword id="KW-0472">Membrane</keyword>
<keyword id="KW-0479">Metal-binding</keyword>
<keyword id="KW-0597">Phosphoprotein</keyword>
<keyword id="KW-0602">Photosynthesis</keyword>
<keyword id="KW-0603">Photosystem I</keyword>
<keyword id="KW-0604">Photosystem II</keyword>
<keyword id="KW-0934">Plastid</keyword>
<keyword id="KW-0793">Thylakoid</keyword>
<keyword id="KW-0812">Transmembrane</keyword>
<keyword id="KW-1133">Transmembrane helix</keyword>
<sequence>TTKKVASSSSPWHGPDGVKYLGPFSGESPSYLTGEFPGDYGWDTAGLSADPETFAKNRELEVIHSRWAMLGALGCVFPELLSRNGVKFGEAVWFKAGSQIFSEGGLDYLGNPSLVHAQSILAIWATQVILMGAVEGYRIAGGPLGEVVDPLYPGGSFDPLGLAEVPEAFAELKVKELKNGRLAMFSMFGFFVPAIVTGKGPLENLADHLADPVNNNAWSYATNFVPGK</sequence>
<gene>
    <name type="primary">AB96</name>
</gene>
<accession>P04159</accession>
<accession>P35389</accession>
<feature type="chain" id="PRO_0000165474" description="Chlorophyll a-b binding protein AB96">
    <location>
        <begin position="1" status="less than"/>
        <end position="228"/>
    </location>
</feature>
<feature type="transmembrane region" description="Helical" evidence="4">
    <location>
        <begin position="62"/>
        <end position="82"/>
    </location>
</feature>
<feature type="transmembrane region" description="Helical" evidence="4">
    <location>
        <begin position="114"/>
        <end position="134"/>
    </location>
</feature>
<feature type="transmembrane region" description="Helical" evidence="4">
    <location>
        <begin position="182"/>
        <end position="202"/>
    </location>
</feature>
<feature type="binding site" description="axial binding residue" evidence="3">
    <location>
        <position position="20"/>
    </location>
    <ligand>
        <name>chlorophyll b</name>
        <dbReference type="ChEBI" id="CHEBI:61721"/>
        <label>1</label>
    </ligand>
    <ligandPart>
        <name>Mg</name>
        <dbReference type="ChEBI" id="CHEBI:25107"/>
    </ligandPart>
</feature>
<feature type="binding site" evidence="1">
    <location>
        <position position="42"/>
    </location>
    <ligand>
        <name>chlorophyll a</name>
        <dbReference type="ChEBI" id="CHEBI:58416"/>
        <label>1</label>
    </ligand>
</feature>
<feature type="binding site" evidence="1">
    <location>
        <position position="48"/>
    </location>
    <ligand>
        <name>chlorophyll a</name>
        <dbReference type="ChEBI" id="CHEBI:58416"/>
        <label>1</label>
    </ligand>
</feature>
<feature type="binding site" description="axial binding residue" evidence="3">
    <location>
        <position position="61"/>
    </location>
    <ligand>
        <name>chlorophyll a</name>
        <dbReference type="ChEBI" id="CHEBI:58416"/>
        <label>1</label>
    </ligand>
    <ligandPart>
        <name>Mg</name>
        <dbReference type="ChEBI" id="CHEBI:25107"/>
    </ligandPart>
</feature>
<feature type="binding site" description="axial binding residue" evidence="3">
    <location>
        <position position="64"/>
    </location>
    <ligand>
        <name>chlorophyll a</name>
        <dbReference type="ChEBI" id="CHEBI:58416"/>
        <label>2</label>
    </ligand>
    <ligandPart>
        <name>Mg</name>
        <dbReference type="ChEBI" id="CHEBI:25107"/>
    </ligandPart>
</feature>
<feature type="binding site" evidence="1">
    <location>
        <position position="66"/>
    </location>
    <ligand>
        <name>chlorophyll b</name>
        <dbReference type="ChEBI" id="CHEBI:61721"/>
        <label>2</label>
    </ligand>
</feature>
<feature type="binding site" evidence="1">
    <location>
        <position position="99"/>
    </location>
    <ligand>
        <name>chlorophyll a</name>
        <dbReference type="ChEBI" id="CHEBI:58416"/>
        <label>3</label>
    </ligand>
</feature>
<feature type="binding site" evidence="1">
    <location>
        <position position="109"/>
    </location>
    <ligand>
        <name>chlorophyll a</name>
        <dbReference type="ChEBI" id="CHEBI:58416"/>
        <label>3</label>
    </ligand>
</feature>
<feature type="binding site" description="axial binding residue" evidence="3">
    <location>
        <position position="115"/>
    </location>
    <ligand>
        <name>chlorophyll b</name>
        <dbReference type="ChEBI" id="CHEBI:61721"/>
        <label>2</label>
    </ligand>
    <ligandPart>
        <name>Mg</name>
        <dbReference type="ChEBI" id="CHEBI:25107"/>
    </ligandPart>
</feature>
<feature type="binding site" evidence="1">
    <location>
        <position position="119"/>
    </location>
    <ligand>
        <name>chlorophyll b</name>
        <dbReference type="ChEBI" id="CHEBI:61721"/>
        <label>3</label>
    </ligand>
</feature>
<feature type="binding site" evidence="1">
    <location>
        <position position="127"/>
    </location>
    <ligand>
        <name>chlorophyll b</name>
        <dbReference type="ChEBI" id="CHEBI:61721"/>
        <label>4</label>
    </ligand>
</feature>
<feature type="binding site" evidence="2">
    <location>
        <position position="127"/>
    </location>
    <ligand>
        <name>chlorophyll b</name>
        <dbReference type="ChEBI" id="CHEBI:61721"/>
        <label>5</label>
    </ligand>
</feature>
<feature type="binding site" description="axial binding residue" evidence="3">
    <location>
        <position position="135"/>
    </location>
    <ligand>
        <name>chlorophyll b</name>
        <dbReference type="ChEBI" id="CHEBI:61721"/>
        <label>3</label>
    </ligand>
    <ligandPart>
        <name>Mg</name>
        <dbReference type="ChEBI" id="CHEBI:25107"/>
    </ligandPart>
</feature>
<feature type="binding site" evidence="1">
    <location>
        <position position="138"/>
    </location>
    <ligand>
        <name>chlorophyll b</name>
        <dbReference type="ChEBI" id="CHEBI:61721"/>
        <label>4</label>
    </ligand>
</feature>
<feature type="binding site" evidence="1">
    <location>
        <position position="144"/>
    </location>
    <ligand>
        <name>chlorophyll b</name>
        <dbReference type="ChEBI" id="CHEBI:61721"/>
        <label>2</label>
    </ligand>
</feature>
<feature type="binding site" description="axial binding residue" evidence="3">
    <location>
        <position position="176"/>
    </location>
    <ligand>
        <name>chlorophyll a</name>
        <dbReference type="ChEBI" id="CHEBI:58416"/>
        <label>3</label>
    </ligand>
    <ligandPart>
        <name>Mg</name>
        <dbReference type="ChEBI" id="CHEBI:25107"/>
    </ligandPart>
</feature>
<feature type="binding site" description="axial binding residue" evidence="3">
    <location>
        <position position="179"/>
    </location>
    <ligand>
        <name>chlorophyll a</name>
        <dbReference type="ChEBI" id="CHEBI:58416"/>
        <label>4</label>
    </ligand>
    <ligandPart>
        <name>Mg</name>
        <dbReference type="ChEBI" id="CHEBI:25107"/>
    </ligandPart>
</feature>
<feature type="binding site" evidence="1">
    <location>
        <position position="181"/>
    </location>
    <ligand>
        <name>chlorophyll a</name>
        <dbReference type="ChEBI" id="CHEBI:58416"/>
        <label>1</label>
    </ligand>
</feature>
<feature type="binding site" description="axial binding residue" evidence="3">
    <location>
        <position position="208"/>
    </location>
    <ligand>
        <name>chlorophyll a</name>
        <dbReference type="ChEBI" id="CHEBI:58416"/>
        <label>6</label>
    </ligand>
    <ligandPart>
        <name>Mg</name>
        <dbReference type="ChEBI" id="CHEBI:25107"/>
    </ligandPart>
</feature>
<feature type="binding site" evidence="1">
    <location>
        <position position="217"/>
    </location>
    <ligand>
        <name>chlorophyll a</name>
        <dbReference type="ChEBI" id="CHEBI:58416"/>
        <label>6</label>
    </ligand>
</feature>
<feature type="binding site" evidence="1">
    <location>
        <position position="224"/>
    </location>
    <ligand>
        <name>chlorophyll b</name>
        <dbReference type="ChEBI" id="CHEBI:61721"/>
        <label>5</label>
    </ligand>
</feature>
<feature type="non-terminal residue">
    <location>
        <position position="1"/>
    </location>
</feature>